<dbReference type="EMBL" id="Z75208">
    <property type="protein sequence ID" value="CAA99551.1"/>
    <property type="molecule type" value="Genomic_DNA"/>
</dbReference>
<dbReference type="EMBL" id="AL009126">
    <property type="protein sequence ID" value="CAB14800.1"/>
    <property type="molecule type" value="Genomic_DNA"/>
</dbReference>
<dbReference type="PIR" id="B69986">
    <property type="entry name" value="B69986"/>
</dbReference>
<dbReference type="RefSeq" id="NP_390718.1">
    <property type="nucleotide sequence ID" value="NC_000964.3"/>
</dbReference>
<dbReference type="RefSeq" id="WP_003229573.1">
    <property type="nucleotide sequence ID" value="NZ_OZ025638.1"/>
</dbReference>
<dbReference type="SMR" id="P97247"/>
<dbReference type="FunCoup" id="P97247">
    <property type="interactions" value="9"/>
</dbReference>
<dbReference type="STRING" id="224308.BSU28400"/>
<dbReference type="PaxDb" id="224308-BSU28400"/>
<dbReference type="EnsemblBacteria" id="CAB14800">
    <property type="protein sequence ID" value="CAB14800"/>
    <property type="gene ID" value="BSU_28400"/>
</dbReference>
<dbReference type="GeneID" id="937461"/>
<dbReference type="KEGG" id="bsu:BSU28400"/>
<dbReference type="PATRIC" id="fig|224308.179.peg.3085"/>
<dbReference type="eggNOG" id="COG1846">
    <property type="taxonomic scope" value="Bacteria"/>
</dbReference>
<dbReference type="InParanoid" id="P97247"/>
<dbReference type="OrthoDB" id="9790052at2"/>
<dbReference type="PhylomeDB" id="P97247"/>
<dbReference type="BioCyc" id="BSUB:BSU28400-MONOMER"/>
<dbReference type="Proteomes" id="UP000001570">
    <property type="component" value="Chromosome"/>
</dbReference>
<dbReference type="GO" id="GO:0003677">
    <property type="term" value="F:DNA binding"/>
    <property type="evidence" value="ECO:0007669"/>
    <property type="project" value="UniProtKB-KW"/>
</dbReference>
<dbReference type="GO" id="GO:0003700">
    <property type="term" value="F:DNA-binding transcription factor activity"/>
    <property type="evidence" value="ECO:0007669"/>
    <property type="project" value="InterPro"/>
</dbReference>
<dbReference type="GO" id="GO:0006355">
    <property type="term" value="P:regulation of DNA-templated transcription"/>
    <property type="evidence" value="ECO:0000318"/>
    <property type="project" value="GO_Central"/>
</dbReference>
<dbReference type="GO" id="GO:0006950">
    <property type="term" value="P:response to stress"/>
    <property type="evidence" value="ECO:0000318"/>
    <property type="project" value="GO_Central"/>
</dbReference>
<dbReference type="Gene3D" id="1.10.10.10">
    <property type="entry name" value="Winged helix-like DNA-binding domain superfamily/Winged helix DNA-binding domain"/>
    <property type="match status" value="1"/>
</dbReference>
<dbReference type="InterPro" id="IPR000835">
    <property type="entry name" value="HTH_MarR-typ"/>
</dbReference>
<dbReference type="InterPro" id="IPR036388">
    <property type="entry name" value="WH-like_DNA-bd_sf"/>
</dbReference>
<dbReference type="InterPro" id="IPR036390">
    <property type="entry name" value="WH_DNA-bd_sf"/>
</dbReference>
<dbReference type="PANTHER" id="PTHR42756">
    <property type="entry name" value="TRANSCRIPTIONAL REGULATOR, MARR"/>
    <property type="match status" value="1"/>
</dbReference>
<dbReference type="PANTHER" id="PTHR42756:SF1">
    <property type="entry name" value="TRANSCRIPTIONAL REPRESSOR OF EMRAB OPERON"/>
    <property type="match status" value="1"/>
</dbReference>
<dbReference type="Pfam" id="PF01047">
    <property type="entry name" value="MarR"/>
    <property type="match status" value="1"/>
</dbReference>
<dbReference type="PRINTS" id="PR00598">
    <property type="entry name" value="HTHMARR"/>
</dbReference>
<dbReference type="SMART" id="SM00347">
    <property type="entry name" value="HTH_MARR"/>
    <property type="match status" value="1"/>
</dbReference>
<dbReference type="SUPFAM" id="SSF46785">
    <property type="entry name" value="Winged helix' DNA-binding domain"/>
    <property type="match status" value="1"/>
</dbReference>
<dbReference type="PROSITE" id="PS50995">
    <property type="entry name" value="HTH_MARR_2"/>
    <property type="match status" value="1"/>
</dbReference>
<proteinExistence type="predicted"/>
<gene>
    <name type="primary">ysmB</name>
    <name type="ordered locus">BSU28400</name>
</gene>
<feature type="chain" id="PRO_0000360554" description="Uncharacterized HTH-type transcriptional regulator YsmB">
    <location>
        <begin position="1"/>
        <end position="146"/>
    </location>
</feature>
<feature type="domain" description="HTH marR-type" evidence="1">
    <location>
        <begin position="9"/>
        <end position="141"/>
    </location>
</feature>
<feature type="DNA-binding region" description="H-T-H motif" evidence="1">
    <location>
        <begin position="55"/>
        <end position="78"/>
    </location>
</feature>
<evidence type="ECO:0000255" key="1">
    <source>
        <dbReference type="PROSITE-ProRule" id="PRU00345"/>
    </source>
</evidence>
<organism>
    <name type="scientific">Bacillus subtilis (strain 168)</name>
    <dbReference type="NCBI Taxonomy" id="224308"/>
    <lineage>
        <taxon>Bacteria</taxon>
        <taxon>Bacillati</taxon>
        <taxon>Bacillota</taxon>
        <taxon>Bacilli</taxon>
        <taxon>Bacillales</taxon>
        <taxon>Bacillaceae</taxon>
        <taxon>Bacillus</taxon>
    </lineage>
</organism>
<keyword id="KW-0238">DNA-binding</keyword>
<keyword id="KW-1185">Reference proteome</keyword>
<keyword id="KW-0804">Transcription</keyword>
<keyword id="KW-0805">Transcription regulation</keyword>
<protein>
    <recommendedName>
        <fullName>Uncharacterized HTH-type transcriptional regulator YsmB</fullName>
    </recommendedName>
</protein>
<accession>P97247</accession>
<accession>Q795X8</accession>
<name>YSMB_BACSU</name>
<sequence length="146" mass="17144">MTSKPLEHVADIEKSLRHIAAIIKQKGREILNQYAITPPQFVGLQWLYELGDMTIGELSGKMYLACSTTTDLIDRMQKNELVERVKDPADRRVVRIHLLPEGERIIQEVITKRQEYLRDMFESFTDEEIAIFEKSLMKLQHEMKRK</sequence>
<reference key="1">
    <citation type="journal article" date="1996" name="Microbiology">
        <title>The dnaB-pheA (256 degrees-240 degrees) region of the Bacillus subtilis chromosome containing genes responsible for stress responses, the utilization of plant cell walls and primary metabolism.</title>
        <authorList>
            <person name="Wipat A."/>
            <person name="Carter N."/>
            <person name="Brignell C.S."/>
            <person name="Guy J.B."/>
            <person name="Piper K."/>
            <person name="Sanders J."/>
            <person name="Emmerson P.T."/>
            <person name="Harwood C.R."/>
        </authorList>
    </citation>
    <scope>NUCLEOTIDE SEQUENCE [GENOMIC DNA]</scope>
    <source>
        <strain>168</strain>
    </source>
</reference>
<reference key="2">
    <citation type="journal article" date="1997" name="Nature">
        <title>The complete genome sequence of the Gram-positive bacterium Bacillus subtilis.</title>
        <authorList>
            <person name="Kunst F."/>
            <person name="Ogasawara N."/>
            <person name="Moszer I."/>
            <person name="Albertini A.M."/>
            <person name="Alloni G."/>
            <person name="Azevedo V."/>
            <person name="Bertero M.G."/>
            <person name="Bessieres P."/>
            <person name="Bolotin A."/>
            <person name="Borchert S."/>
            <person name="Borriss R."/>
            <person name="Boursier L."/>
            <person name="Brans A."/>
            <person name="Braun M."/>
            <person name="Brignell S.C."/>
            <person name="Bron S."/>
            <person name="Brouillet S."/>
            <person name="Bruschi C.V."/>
            <person name="Caldwell B."/>
            <person name="Capuano V."/>
            <person name="Carter N.M."/>
            <person name="Choi S.-K."/>
            <person name="Codani J.-J."/>
            <person name="Connerton I.F."/>
            <person name="Cummings N.J."/>
            <person name="Daniel R.A."/>
            <person name="Denizot F."/>
            <person name="Devine K.M."/>
            <person name="Duesterhoeft A."/>
            <person name="Ehrlich S.D."/>
            <person name="Emmerson P.T."/>
            <person name="Entian K.-D."/>
            <person name="Errington J."/>
            <person name="Fabret C."/>
            <person name="Ferrari E."/>
            <person name="Foulger D."/>
            <person name="Fritz C."/>
            <person name="Fujita M."/>
            <person name="Fujita Y."/>
            <person name="Fuma S."/>
            <person name="Galizzi A."/>
            <person name="Galleron N."/>
            <person name="Ghim S.-Y."/>
            <person name="Glaser P."/>
            <person name="Goffeau A."/>
            <person name="Golightly E.J."/>
            <person name="Grandi G."/>
            <person name="Guiseppi G."/>
            <person name="Guy B.J."/>
            <person name="Haga K."/>
            <person name="Haiech J."/>
            <person name="Harwood C.R."/>
            <person name="Henaut A."/>
            <person name="Hilbert H."/>
            <person name="Holsappel S."/>
            <person name="Hosono S."/>
            <person name="Hullo M.-F."/>
            <person name="Itaya M."/>
            <person name="Jones L.-M."/>
            <person name="Joris B."/>
            <person name="Karamata D."/>
            <person name="Kasahara Y."/>
            <person name="Klaerr-Blanchard M."/>
            <person name="Klein C."/>
            <person name="Kobayashi Y."/>
            <person name="Koetter P."/>
            <person name="Koningstein G."/>
            <person name="Krogh S."/>
            <person name="Kumano M."/>
            <person name="Kurita K."/>
            <person name="Lapidus A."/>
            <person name="Lardinois S."/>
            <person name="Lauber J."/>
            <person name="Lazarevic V."/>
            <person name="Lee S.-M."/>
            <person name="Levine A."/>
            <person name="Liu H."/>
            <person name="Masuda S."/>
            <person name="Mauel C."/>
            <person name="Medigue C."/>
            <person name="Medina N."/>
            <person name="Mellado R.P."/>
            <person name="Mizuno M."/>
            <person name="Moestl D."/>
            <person name="Nakai S."/>
            <person name="Noback M."/>
            <person name="Noone D."/>
            <person name="O'Reilly M."/>
            <person name="Ogawa K."/>
            <person name="Ogiwara A."/>
            <person name="Oudega B."/>
            <person name="Park S.-H."/>
            <person name="Parro V."/>
            <person name="Pohl T.M."/>
            <person name="Portetelle D."/>
            <person name="Porwollik S."/>
            <person name="Prescott A.M."/>
            <person name="Presecan E."/>
            <person name="Pujic P."/>
            <person name="Purnelle B."/>
            <person name="Rapoport G."/>
            <person name="Rey M."/>
            <person name="Reynolds S."/>
            <person name="Rieger M."/>
            <person name="Rivolta C."/>
            <person name="Rocha E."/>
            <person name="Roche B."/>
            <person name="Rose M."/>
            <person name="Sadaie Y."/>
            <person name="Sato T."/>
            <person name="Scanlan E."/>
            <person name="Schleich S."/>
            <person name="Schroeter R."/>
            <person name="Scoffone F."/>
            <person name="Sekiguchi J."/>
            <person name="Sekowska A."/>
            <person name="Seror S.J."/>
            <person name="Serror P."/>
            <person name="Shin B.-S."/>
            <person name="Soldo B."/>
            <person name="Sorokin A."/>
            <person name="Tacconi E."/>
            <person name="Takagi T."/>
            <person name="Takahashi H."/>
            <person name="Takemaru K."/>
            <person name="Takeuchi M."/>
            <person name="Tamakoshi A."/>
            <person name="Tanaka T."/>
            <person name="Terpstra P."/>
            <person name="Tognoni A."/>
            <person name="Tosato V."/>
            <person name="Uchiyama S."/>
            <person name="Vandenbol M."/>
            <person name="Vannier F."/>
            <person name="Vassarotti A."/>
            <person name="Viari A."/>
            <person name="Wambutt R."/>
            <person name="Wedler E."/>
            <person name="Wedler H."/>
            <person name="Weitzenegger T."/>
            <person name="Winters P."/>
            <person name="Wipat A."/>
            <person name="Yamamoto H."/>
            <person name="Yamane K."/>
            <person name="Yasumoto K."/>
            <person name="Yata K."/>
            <person name="Yoshida K."/>
            <person name="Yoshikawa H.-F."/>
            <person name="Zumstein E."/>
            <person name="Yoshikawa H."/>
            <person name="Danchin A."/>
        </authorList>
    </citation>
    <scope>NUCLEOTIDE SEQUENCE [LARGE SCALE GENOMIC DNA]</scope>
    <source>
        <strain>168</strain>
    </source>
</reference>